<comment type="function">
    <text>Marginally higher substrate specificity for L-DOPA over L-tyrosine.</text>
</comment>
<comment type="catalytic activity">
    <reaction>
        <text>L-tyrosine + H(+) = tyramine + CO2</text>
        <dbReference type="Rhea" id="RHEA:14345"/>
        <dbReference type="ChEBI" id="CHEBI:15378"/>
        <dbReference type="ChEBI" id="CHEBI:16526"/>
        <dbReference type="ChEBI" id="CHEBI:58315"/>
        <dbReference type="ChEBI" id="CHEBI:327995"/>
        <dbReference type="EC" id="4.1.1.25"/>
    </reaction>
</comment>
<comment type="catalytic activity">
    <reaction>
        <text>L-dopa + H(+) = dopamine + CO2</text>
        <dbReference type="Rhea" id="RHEA:12272"/>
        <dbReference type="ChEBI" id="CHEBI:15378"/>
        <dbReference type="ChEBI" id="CHEBI:16526"/>
        <dbReference type="ChEBI" id="CHEBI:57504"/>
        <dbReference type="ChEBI" id="CHEBI:59905"/>
        <dbReference type="EC" id="4.1.1.28"/>
    </reaction>
</comment>
<comment type="catalytic activity">
    <reaction>
        <text>5-hydroxy-L-tryptophan + H(+) = serotonin + CO2</text>
        <dbReference type="Rhea" id="RHEA:18533"/>
        <dbReference type="ChEBI" id="CHEBI:15378"/>
        <dbReference type="ChEBI" id="CHEBI:16526"/>
        <dbReference type="ChEBI" id="CHEBI:58266"/>
        <dbReference type="ChEBI" id="CHEBI:350546"/>
        <dbReference type="EC" id="4.1.1.28"/>
    </reaction>
</comment>
<comment type="cofactor">
    <cofactor>
        <name>pyridoxal 5'-phosphate</name>
        <dbReference type="ChEBI" id="CHEBI:597326"/>
    </cofactor>
</comment>
<comment type="subunit">
    <text evidence="1">Homodimer.</text>
</comment>
<comment type="tissue specificity">
    <text>Predominantly expressed in the roots.</text>
</comment>
<comment type="similarity">
    <text evidence="2">Belongs to the group II decarboxylase family.</text>
</comment>
<gene>
    <name type="primary">TYDC1</name>
</gene>
<organism>
    <name type="scientific">Papaver somniferum</name>
    <name type="common">Opium poppy</name>
    <dbReference type="NCBI Taxonomy" id="3469"/>
    <lineage>
        <taxon>Eukaryota</taxon>
        <taxon>Viridiplantae</taxon>
        <taxon>Streptophyta</taxon>
        <taxon>Embryophyta</taxon>
        <taxon>Tracheophyta</taxon>
        <taxon>Spermatophyta</taxon>
        <taxon>Magnoliopsida</taxon>
        <taxon>Ranunculales</taxon>
        <taxon>Papaveraceae</taxon>
        <taxon>Papaveroideae</taxon>
        <taxon>Papaver</taxon>
    </lineage>
</organism>
<keyword id="KW-0210">Decarboxylase</keyword>
<keyword id="KW-0456">Lyase</keyword>
<keyword id="KW-0663">Pyridoxal phosphate</keyword>
<reference key="1">
    <citation type="journal article" date="1994" name="J. Biol. Chem.">
        <title>Differential and tissue-specific expression of a gene family for tyrosine/dopa decarboxylase in opium poppy.</title>
        <authorList>
            <person name="Facchini P.J."/>
            <person name="de Luca V."/>
        </authorList>
    </citation>
    <scope>NUCLEOTIDE SEQUENCE [GENOMIC DNA]</scope>
    <source>
        <strain>cv. Marianne</strain>
    </source>
</reference>
<proteinExistence type="evidence at transcript level"/>
<feature type="chain" id="PRO_0000146999" description="Tyrosine/DOPA decarboxylase 1">
    <location>
        <begin position="1"/>
        <end position="518"/>
    </location>
</feature>
<feature type="modified residue" description="N6-(pyridoxal phosphate)lysine" evidence="1">
    <location>
        <position position="321"/>
    </location>
</feature>
<evidence type="ECO:0000250" key="1"/>
<evidence type="ECO:0000305" key="2"/>
<name>TYDC1_PAPSO</name>
<sequence>MGSLPANNFESMSLCSQNPLDPDEFRRQGHMIIDFLADYYKNVEKYPVRTQVDPGYLKKRLPESAPYNPESIETILEDVTNDIIPGLTHWQSPNYFAYFPSSGSIAGFLGEMLSTGFNVVGFNWMSSPAATELESIVMNWLGQMLTLPKSFLFSSDGSSGGGGVLQGTTCEAILCTLTAARDKMLNKIGRENINKLVVYASDQTLSALQKAAQIAGINPKNFLAIATSKATNFGLSPNSLQSTILADIESGLVPLFLCATVGTTSSTAVDPIGPLCAVAKLHGIWVHIDAAYAGSACICPEFRHFIDGVEDADSFSLNAHKWFFTTLDCCCLWVKDSDSLVKALSTSPEYLKNKATDSKQVIDYKDWQIALSRRFRSMKLWLVLRSYGIANLRTFLRSHVKMAKHFQGLIGMDNRFEIVVPRTFAMVCFRLKPAAIFRKKIVEDDHIEAQTNEVNAKLLESVNASGKIYMTHAVVGGVYMIRFAVGATLTEERHVTGAWKVVQEHTDAILGALGEDVC</sequence>
<accession>P54768</accession>
<protein>
    <recommendedName>
        <fullName>Tyrosine/DOPA decarboxylase 1</fullName>
    </recommendedName>
    <domain>
        <recommendedName>
            <fullName>DOPA decarboxylase</fullName>
            <shortName>DDC</shortName>
            <ecNumber>4.1.1.28</ecNumber>
        </recommendedName>
    </domain>
    <domain>
        <recommendedName>
            <fullName>Tyrosine decarboxylase</fullName>
            <ecNumber>4.1.1.25</ecNumber>
        </recommendedName>
    </domain>
</protein>
<dbReference type="EC" id="4.1.1.28"/>
<dbReference type="EC" id="4.1.1.25"/>
<dbReference type="EMBL" id="U08597">
    <property type="protein sequence ID" value="AAA62346.1"/>
    <property type="molecule type" value="Genomic_DNA"/>
</dbReference>
<dbReference type="PIR" id="A55066">
    <property type="entry name" value="A55066"/>
</dbReference>
<dbReference type="SMR" id="P54768"/>
<dbReference type="BRENDA" id="4.1.1.25">
    <property type="organism ID" value="4515"/>
</dbReference>
<dbReference type="GO" id="GO:0005737">
    <property type="term" value="C:cytoplasm"/>
    <property type="evidence" value="ECO:0007669"/>
    <property type="project" value="TreeGrafter"/>
</dbReference>
<dbReference type="GO" id="GO:0036467">
    <property type="term" value="F:5-hydroxy-L-tryptophan decarboxylase activity"/>
    <property type="evidence" value="ECO:0007669"/>
    <property type="project" value="RHEA"/>
</dbReference>
<dbReference type="GO" id="GO:0036468">
    <property type="term" value="F:L-dopa decarboxylase activity"/>
    <property type="evidence" value="ECO:0007669"/>
    <property type="project" value="RHEA"/>
</dbReference>
<dbReference type="GO" id="GO:0030170">
    <property type="term" value="F:pyridoxal phosphate binding"/>
    <property type="evidence" value="ECO:0007669"/>
    <property type="project" value="InterPro"/>
</dbReference>
<dbReference type="GO" id="GO:0004837">
    <property type="term" value="F:tyrosine decarboxylase activity"/>
    <property type="evidence" value="ECO:0007669"/>
    <property type="project" value="UniProtKB-EC"/>
</dbReference>
<dbReference type="GO" id="GO:0006520">
    <property type="term" value="P:amino acid metabolic process"/>
    <property type="evidence" value="ECO:0007669"/>
    <property type="project" value="InterPro"/>
</dbReference>
<dbReference type="GO" id="GO:0019752">
    <property type="term" value="P:carboxylic acid metabolic process"/>
    <property type="evidence" value="ECO:0007669"/>
    <property type="project" value="InterPro"/>
</dbReference>
<dbReference type="FunFam" id="1.20.1340.10:FF:000001">
    <property type="entry name" value="Histidine decarboxylase"/>
    <property type="match status" value="1"/>
</dbReference>
<dbReference type="FunFam" id="3.40.640.10:FF:000025">
    <property type="entry name" value="Histidine decarboxylase"/>
    <property type="match status" value="1"/>
</dbReference>
<dbReference type="Gene3D" id="3.90.1150.10">
    <property type="entry name" value="Aspartate Aminotransferase, domain 1"/>
    <property type="match status" value="1"/>
</dbReference>
<dbReference type="Gene3D" id="1.20.1340.10">
    <property type="entry name" value="dopa decarboxylase, N-terminal domain"/>
    <property type="match status" value="1"/>
</dbReference>
<dbReference type="Gene3D" id="3.40.640.10">
    <property type="entry name" value="Type I PLP-dependent aspartate aminotransferase-like (Major domain)"/>
    <property type="match status" value="1"/>
</dbReference>
<dbReference type="InterPro" id="IPR010977">
    <property type="entry name" value="Aromatic_deC"/>
</dbReference>
<dbReference type="InterPro" id="IPR002129">
    <property type="entry name" value="PyrdxlP-dep_de-COase"/>
</dbReference>
<dbReference type="InterPro" id="IPR015424">
    <property type="entry name" value="PyrdxlP-dep_Trfase"/>
</dbReference>
<dbReference type="InterPro" id="IPR015421">
    <property type="entry name" value="PyrdxlP-dep_Trfase_major"/>
</dbReference>
<dbReference type="InterPro" id="IPR015422">
    <property type="entry name" value="PyrdxlP-dep_Trfase_small"/>
</dbReference>
<dbReference type="InterPro" id="IPR021115">
    <property type="entry name" value="Pyridoxal-P_BS"/>
</dbReference>
<dbReference type="PANTHER" id="PTHR11999">
    <property type="entry name" value="GROUP II PYRIDOXAL-5-PHOSPHATE DECARBOXYLASE"/>
    <property type="match status" value="1"/>
</dbReference>
<dbReference type="PANTHER" id="PTHR11999:SF96">
    <property type="entry name" value="TYROSINE DECARBOXYLASE"/>
    <property type="match status" value="1"/>
</dbReference>
<dbReference type="Pfam" id="PF00282">
    <property type="entry name" value="Pyridoxal_deC"/>
    <property type="match status" value="1"/>
</dbReference>
<dbReference type="PRINTS" id="PR00800">
    <property type="entry name" value="YHDCRBOXLASE"/>
</dbReference>
<dbReference type="SUPFAM" id="SSF53383">
    <property type="entry name" value="PLP-dependent transferases"/>
    <property type="match status" value="1"/>
</dbReference>
<dbReference type="PROSITE" id="PS00392">
    <property type="entry name" value="DDC_GAD_HDC_YDC"/>
    <property type="match status" value="1"/>
</dbReference>